<proteinExistence type="inferred from homology"/>
<reference key="1">
    <citation type="submission" date="2008-08" db="EMBL/GenBank/DDBJ databases">
        <title>The complete genome sequence of Thermodesulfovibrio yellowstonii strain ATCC 51303 / DSM 11347 / YP87.</title>
        <authorList>
            <person name="Dodson R.J."/>
            <person name="Durkin A.S."/>
            <person name="Wu M."/>
            <person name="Eisen J."/>
            <person name="Sutton G."/>
        </authorList>
    </citation>
    <scope>NUCLEOTIDE SEQUENCE [LARGE SCALE GENOMIC DNA]</scope>
    <source>
        <strain>ATCC 51303 / DSM 11347 / YP87</strain>
    </source>
</reference>
<feature type="chain" id="PRO_1000100621" description="Adenylate kinase">
    <location>
        <begin position="1"/>
        <end position="215"/>
    </location>
</feature>
<feature type="region of interest" description="NMP" evidence="1">
    <location>
        <begin position="30"/>
        <end position="59"/>
    </location>
</feature>
<feature type="region of interest" description="LID" evidence="1">
    <location>
        <begin position="126"/>
        <end position="163"/>
    </location>
</feature>
<feature type="binding site" evidence="1">
    <location>
        <begin position="10"/>
        <end position="15"/>
    </location>
    <ligand>
        <name>ATP</name>
        <dbReference type="ChEBI" id="CHEBI:30616"/>
    </ligand>
</feature>
<feature type="binding site" evidence="1">
    <location>
        <position position="31"/>
    </location>
    <ligand>
        <name>AMP</name>
        <dbReference type="ChEBI" id="CHEBI:456215"/>
    </ligand>
</feature>
<feature type="binding site" evidence="1">
    <location>
        <position position="36"/>
    </location>
    <ligand>
        <name>AMP</name>
        <dbReference type="ChEBI" id="CHEBI:456215"/>
    </ligand>
</feature>
<feature type="binding site" evidence="1">
    <location>
        <begin position="57"/>
        <end position="59"/>
    </location>
    <ligand>
        <name>AMP</name>
        <dbReference type="ChEBI" id="CHEBI:456215"/>
    </ligand>
</feature>
<feature type="binding site" evidence="1">
    <location>
        <begin position="85"/>
        <end position="88"/>
    </location>
    <ligand>
        <name>AMP</name>
        <dbReference type="ChEBI" id="CHEBI:456215"/>
    </ligand>
</feature>
<feature type="binding site" evidence="1">
    <location>
        <position position="92"/>
    </location>
    <ligand>
        <name>AMP</name>
        <dbReference type="ChEBI" id="CHEBI:456215"/>
    </ligand>
</feature>
<feature type="binding site" evidence="1">
    <location>
        <position position="127"/>
    </location>
    <ligand>
        <name>ATP</name>
        <dbReference type="ChEBI" id="CHEBI:30616"/>
    </ligand>
</feature>
<feature type="binding site" evidence="1">
    <location>
        <position position="130"/>
    </location>
    <ligand>
        <name>Zn(2+)</name>
        <dbReference type="ChEBI" id="CHEBI:29105"/>
        <note>structural</note>
    </ligand>
</feature>
<feature type="binding site" evidence="1">
    <location>
        <position position="133"/>
    </location>
    <ligand>
        <name>Zn(2+)</name>
        <dbReference type="ChEBI" id="CHEBI:29105"/>
        <note>structural</note>
    </ligand>
</feature>
<feature type="binding site" evidence="1">
    <location>
        <position position="150"/>
    </location>
    <ligand>
        <name>Zn(2+)</name>
        <dbReference type="ChEBI" id="CHEBI:29105"/>
        <note>structural</note>
    </ligand>
</feature>
<feature type="binding site" evidence="1">
    <location>
        <position position="153"/>
    </location>
    <ligand>
        <name>Zn(2+)</name>
        <dbReference type="ChEBI" id="CHEBI:29105"/>
        <note>structural</note>
    </ligand>
</feature>
<feature type="binding site" evidence="1">
    <location>
        <position position="160"/>
    </location>
    <ligand>
        <name>AMP</name>
        <dbReference type="ChEBI" id="CHEBI:456215"/>
    </ligand>
</feature>
<feature type="binding site" evidence="1">
    <location>
        <position position="171"/>
    </location>
    <ligand>
        <name>AMP</name>
        <dbReference type="ChEBI" id="CHEBI:456215"/>
    </ligand>
</feature>
<feature type="binding site" evidence="1">
    <location>
        <position position="199"/>
    </location>
    <ligand>
        <name>ATP</name>
        <dbReference type="ChEBI" id="CHEBI:30616"/>
    </ligand>
</feature>
<organism>
    <name type="scientific">Thermodesulfovibrio yellowstonii (strain ATCC 51303 / DSM 11347 / YP87)</name>
    <dbReference type="NCBI Taxonomy" id="289376"/>
    <lineage>
        <taxon>Bacteria</taxon>
        <taxon>Pseudomonadati</taxon>
        <taxon>Nitrospirota</taxon>
        <taxon>Thermodesulfovibrionia</taxon>
        <taxon>Thermodesulfovibrionales</taxon>
        <taxon>Thermodesulfovibrionaceae</taxon>
        <taxon>Thermodesulfovibrio</taxon>
    </lineage>
</organism>
<comment type="function">
    <text evidence="1">Catalyzes the reversible transfer of the terminal phosphate group between ATP and AMP. Plays an important role in cellular energy homeostasis and in adenine nucleotide metabolism.</text>
</comment>
<comment type="catalytic activity">
    <reaction evidence="1">
        <text>AMP + ATP = 2 ADP</text>
        <dbReference type="Rhea" id="RHEA:12973"/>
        <dbReference type="ChEBI" id="CHEBI:30616"/>
        <dbReference type="ChEBI" id="CHEBI:456215"/>
        <dbReference type="ChEBI" id="CHEBI:456216"/>
        <dbReference type="EC" id="2.7.4.3"/>
    </reaction>
</comment>
<comment type="pathway">
    <text evidence="1">Purine metabolism; AMP biosynthesis via salvage pathway; AMP from ADP: step 1/1.</text>
</comment>
<comment type="subunit">
    <text evidence="1">Monomer.</text>
</comment>
<comment type="subcellular location">
    <subcellularLocation>
        <location evidence="1">Cytoplasm</location>
    </subcellularLocation>
</comment>
<comment type="domain">
    <text evidence="1">Consists of three domains, a large central CORE domain and two small peripheral domains, NMPbind and LID, which undergo movements during catalysis. The LID domain closes over the site of phosphoryl transfer upon ATP binding. Assembling and dissambling the active center during each catalytic cycle provides an effective means to prevent ATP hydrolysis. Some bacteria have evolved a zinc-coordinating structure that stabilizes the LID domain.</text>
</comment>
<comment type="similarity">
    <text evidence="1">Belongs to the adenylate kinase family.</text>
</comment>
<dbReference type="EC" id="2.7.4.3" evidence="1"/>
<dbReference type="EMBL" id="CP001147">
    <property type="protein sequence ID" value="ACI22097.1"/>
    <property type="molecule type" value="Genomic_DNA"/>
</dbReference>
<dbReference type="RefSeq" id="WP_012546790.1">
    <property type="nucleotide sequence ID" value="NC_011296.1"/>
</dbReference>
<dbReference type="RefSeq" id="YP_002249627.1">
    <property type="nucleotide sequence ID" value="NC_011296.1"/>
</dbReference>
<dbReference type="SMR" id="B5YHP1"/>
<dbReference type="FunCoup" id="B5YHP1">
    <property type="interactions" value="459"/>
</dbReference>
<dbReference type="STRING" id="289376.THEYE_A1836"/>
<dbReference type="EnsemblBacteria" id="ACI22097">
    <property type="protein sequence ID" value="ACI22097"/>
    <property type="gene ID" value="THEYE_A1836"/>
</dbReference>
<dbReference type="KEGG" id="tye:THEYE_A1836"/>
<dbReference type="PATRIC" id="fig|289376.4.peg.1791"/>
<dbReference type="eggNOG" id="COG0563">
    <property type="taxonomic scope" value="Bacteria"/>
</dbReference>
<dbReference type="HOGENOM" id="CLU_032354_1_2_0"/>
<dbReference type="InParanoid" id="B5YHP1"/>
<dbReference type="OrthoDB" id="9805030at2"/>
<dbReference type="UniPathway" id="UPA00588">
    <property type="reaction ID" value="UER00649"/>
</dbReference>
<dbReference type="Proteomes" id="UP000000718">
    <property type="component" value="Chromosome"/>
</dbReference>
<dbReference type="GO" id="GO:0005737">
    <property type="term" value="C:cytoplasm"/>
    <property type="evidence" value="ECO:0000318"/>
    <property type="project" value="GO_Central"/>
</dbReference>
<dbReference type="GO" id="GO:0005829">
    <property type="term" value="C:cytosol"/>
    <property type="evidence" value="ECO:0000318"/>
    <property type="project" value="GO_Central"/>
</dbReference>
<dbReference type="GO" id="GO:0004017">
    <property type="term" value="F:adenylate kinase activity"/>
    <property type="evidence" value="ECO:0000318"/>
    <property type="project" value="GO_Central"/>
</dbReference>
<dbReference type="GO" id="GO:0005524">
    <property type="term" value="F:ATP binding"/>
    <property type="evidence" value="ECO:0007669"/>
    <property type="project" value="UniProtKB-UniRule"/>
</dbReference>
<dbReference type="GO" id="GO:0004550">
    <property type="term" value="F:nucleoside diphosphate kinase activity"/>
    <property type="evidence" value="ECO:0000318"/>
    <property type="project" value="GO_Central"/>
</dbReference>
<dbReference type="GO" id="GO:0008270">
    <property type="term" value="F:zinc ion binding"/>
    <property type="evidence" value="ECO:0007669"/>
    <property type="project" value="UniProtKB-UniRule"/>
</dbReference>
<dbReference type="GO" id="GO:0044209">
    <property type="term" value="P:AMP salvage"/>
    <property type="evidence" value="ECO:0007669"/>
    <property type="project" value="UniProtKB-UniRule"/>
</dbReference>
<dbReference type="GO" id="GO:0009132">
    <property type="term" value="P:nucleoside diphosphate metabolic process"/>
    <property type="evidence" value="ECO:0000318"/>
    <property type="project" value="GO_Central"/>
</dbReference>
<dbReference type="GO" id="GO:0009123">
    <property type="term" value="P:nucleoside monophosphate metabolic process"/>
    <property type="evidence" value="ECO:0000318"/>
    <property type="project" value="GO_Central"/>
</dbReference>
<dbReference type="CDD" id="cd01428">
    <property type="entry name" value="ADK"/>
    <property type="match status" value="1"/>
</dbReference>
<dbReference type="FunFam" id="3.40.50.300:FF:000106">
    <property type="entry name" value="Adenylate kinase mitochondrial"/>
    <property type="match status" value="1"/>
</dbReference>
<dbReference type="Gene3D" id="3.40.50.300">
    <property type="entry name" value="P-loop containing nucleotide triphosphate hydrolases"/>
    <property type="match status" value="1"/>
</dbReference>
<dbReference type="HAMAP" id="MF_00235">
    <property type="entry name" value="Adenylate_kinase_Adk"/>
    <property type="match status" value="1"/>
</dbReference>
<dbReference type="InterPro" id="IPR006259">
    <property type="entry name" value="Adenyl_kin_sub"/>
</dbReference>
<dbReference type="InterPro" id="IPR000850">
    <property type="entry name" value="Adenylat/UMP-CMP_kin"/>
</dbReference>
<dbReference type="InterPro" id="IPR033690">
    <property type="entry name" value="Adenylat_kinase_CS"/>
</dbReference>
<dbReference type="InterPro" id="IPR007862">
    <property type="entry name" value="Adenylate_kinase_lid-dom"/>
</dbReference>
<dbReference type="InterPro" id="IPR027417">
    <property type="entry name" value="P-loop_NTPase"/>
</dbReference>
<dbReference type="NCBIfam" id="TIGR01351">
    <property type="entry name" value="adk"/>
    <property type="match status" value="1"/>
</dbReference>
<dbReference type="NCBIfam" id="NF001379">
    <property type="entry name" value="PRK00279.1-1"/>
    <property type="match status" value="1"/>
</dbReference>
<dbReference type="NCBIfam" id="NF001380">
    <property type="entry name" value="PRK00279.1-2"/>
    <property type="match status" value="1"/>
</dbReference>
<dbReference type="NCBIfam" id="NF001381">
    <property type="entry name" value="PRK00279.1-3"/>
    <property type="match status" value="1"/>
</dbReference>
<dbReference type="NCBIfam" id="NF011100">
    <property type="entry name" value="PRK14527.1"/>
    <property type="match status" value="1"/>
</dbReference>
<dbReference type="PANTHER" id="PTHR23359">
    <property type="entry name" value="NUCLEOTIDE KINASE"/>
    <property type="match status" value="1"/>
</dbReference>
<dbReference type="Pfam" id="PF00406">
    <property type="entry name" value="ADK"/>
    <property type="match status" value="1"/>
</dbReference>
<dbReference type="Pfam" id="PF05191">
    <property type="entry name" value="ADK_lid"/>
    <property type="match status" value="1"/>
</dbReference>
<dbReference type="PRINTS" id="PR00094">
    <property type="entry name" value="ADENYLTKNASE"/>
</dbReference>
<dbReference type="SUPFAM" id="SSF52540">
    <property type="entry name" value="P-loop containing nucleoside triphosphate hydrolases"/>
    <property type="match status" value="1"/>
</dbReference>
<dbReference type="PROSITE" id="PS00113">
    <property type="entry name" value="ADENYLATE_KINASE"/>
    <property type="match status" value="1"/>
</dbReference>
<accession>B5YHP1</accession>
<sequence length="215" mass="23827">MRLVFLGAPGAGKGTQAKRLVEKYGIPQISTGDLLRAAVAAGTPLGKEAKAYMDRGELVPDKVVLGMVKERLSQNDCKKGFILDGFPRNVAQAEALDKMLSEMNMPLDLALNLDVPFDDLMKRLTGRRTCKSCGQMYNVYYSPSKVEGKCDKCGGELFQRDDDKEETIRKRLEVYRAQTEPLIDYYSKKGILKSVSGTGSIDEIFNSICAILEKK</sequence>
<name>KAD_THEYD</name>
<evidence type="ECO:0000255" key="1">
    <source>
        <dbReference type="HAMAP-Rule" id="MF_00235"/>
    </source>
</evidence>
<protein>
    <recommendedName>
        <fullName evidence="1">Adenylate kinase</fullName>
        <shortName evidence="1">AK</shortName>
        <ecNumber evidence="1">2.7.4.3</ecNumber>
    </recommendedName>
    <alternativeName>
        <fullName evidence="1">ATP-AMP transphosphorylase</fullName>
    </alternativeName>
    <alternativeName>
        <fullName evidence="1">ATP:AMP phosphotransferase</fullName>
    </alternativeName>
    <alternativeName>
        <fullName evidence="1">Adenylate monophosphate kinase</fullName>
    </alternativeName>
</protein>
<keyword id="KW-0067">ATP-binding</keyword>
<keyword id="KW-0963">Cytoplasm</keyword>
<keyword id="KW-0418">Kinase</keyword>
<keyword id="KW-0479">Metal-binding</keyword>
<keyword id="KW-0545">Nucleotide biosynthesis</keyword>
<keyword id="KW-0547">Nucleotide-binding</keyword>
<keyword id="KW-1185">Reference proteome</keyword>
<keyword id="KW-0808">Transferase</keyword>
<keyword id="KW-0862">Zinc</keyword>
<gene>
    <name evidence="1" type="primary">adk</name>
    <name type="ordered locus">THEYE_A1836</name>
</gene>